<feature type="initiator methionine" description="Removed" evidence="4">
    <location>
        <position position="1"/>
    </location>
</feature>
<feature type="chain" id="PRO_0000051655" description="Cytochrome P450 1A2">
    <location>
        <begin position="2"/>
        <end position="516"/>
    </location>
</feature>
<feature type="binding site" evidence="1">
    <location>
        <position position="226"/>
    </location>
    <ligand>
        <name>substrate</name>
    </ligand>
</feature>
<feature type="binding site">
    <location>
        <begin position="361"/>
        <end position="365"/>
    </location>
    <ligand>
        <name>substrate</name>
    </ligand>
</feature>
<feature type="binding site" description="axial binding residue">
    <location>
        <position position="458"/>
    </location>
    <ligand>
        <name>heme</name>
        <dbReference type="ChEBI" id="CHEBI:30413"/>
    </ligand>
    <ligandPart>
        <name>Fe</name>
        <dbReference type="ChEBI" id="CHEBI:18248"/>
    </ligandPart>
</feature>
<feature type="site" description="Involved in electron transfer with reductase">
    <location>
        <position position="403"/>
    </location>
</feature>
<feature type="glycosylation site" description="O-linked (GlcNAc) serine" evidence="1">
    <location>
        <position position="69"/>
    </location>
</feature>
<feature type="sequence variant" evidence="3">
    <original>G</original>
    <variation>S</variation>
    <location>
        <position position="174"/>
    </location>
</feature>
<feature type="sequence variant" evidence="3">
    <original>G</original>
    <variation>S</variation>
    <location>
        <position position="233"/>
    </location>
</feature>
<feature type="sequence variant" evidence="3">
    <original>S</original>
    <variation>G</variation>
    <location>
        <position position="299"/>
    </location>
</feature>
<feature type="sequence conflict" description="In Ref. 3; AA sequence." evidence="5" ref="3">
    <original>C</original>
    <variation>S</variation>
    <location>
        <position position="22"/>
    </location>
</feature>
<feature type="sequence conflict" description="In Ref. 1; AAA31437." evidence="5" ref="1">
    <original>R</original>
    <variation>P</variation>
    <location>
        <position position="67"/>
    </location>
</feature>
<feature type="sequence conflict" description="In Ref. 3; AA sequence." evidence="5" ref="3">
    <original>R</original>
    <variation>Q</variation>
    <location>
        <position position="70"/>
    </location>
</feature>
<feature type="sequence conflict" description="In Ref. 3; AA sequence." evidence="5" ref="3">
    <original>D</original>
    <variation>N</variation>
    <location>
        <position position="92"/>
    </location>
</feature>
<feature type="sequence conflict" description="In Ref. 4; AAA31433." evidence="5" ref="4">
    <original>T</original>
    <variation>H</variation>
    <location>
        <position position="93"/>
    </location>
</feature>
<feature type="sequence conflict" description="In Ref. 2; CAA29171." evidence="5" ref="2">
    <original>Q</original>
    <variation>H</variation>
    <location>
        <position position="121"/>
    </location>
</feature>
<feature type="sequence conflict" description="In Ref. 3; AA sequence." evidence="5" ref="3">
    <original>L</original>
    <variation>F</variation>
    <location>
        <position position="172"/>
    </location>
</feature>
<feature type="sequence conflict" description="In Ref. 3; AA sequence." evidence="5" ref="3">
    <original>V</original>
    <variation>S</variation>
    <location>
        <position position="194"/>
    </location>
</feature>
<feature type="sequence conflict" description="In Ref. 3; AA sequence." evidence="5" ref="3">
    <original>RFPQG</original>
    <variation>FPQGM</variation>
    <location>
        <begin position="208"/>
        <end position="212"/>
    </location>
</feature>
<feature type="sequence conflict" description="In Ref. 1; AAA31437/CAA32066 and 4; AAA31433." evidence="5" ref="1 4">
    <original>R</original>
    <variation>H</variation>
    <location>
        <position position="208"/>
    </location>
</feature>
<feature type="sequence conflict" description="In Ref. 3; AA sequence." evidence="5" ref="3">
    <original>NRPLQ</original>
    <variation>QPNLR</variation>
    <location>
        <begin position="247"/>
        <end position="251"/>
    </location>
</feature>
<feature type="sequence conflict" description="In Ref. 4; AAA31433." evidence="5" ref="4">
    <original>F</original>
    <variation>I</variation>
    <location>
        <position position="288"/>
    </location>
</feature>
<feature type="sequence conflict" description="In Ref. 4; AAA31433." evidence="5" ref="4">
    <original>SEKNSKANSGLI</original>
    <variation>NEMDSMDDGAHV</variation>
    <location>
        <begin position="291"/>
        <end position="302"/>
    </location>
</feature>
<feature type="sequence conflict" description="In Ref. 4; AAA31433." evidence="5" ref="4">
    <original>N</original>
    <variation>T</variation>
    <location>
        <position position="309"/>
    </location>
</feature>
<feature type="sequence conflict" description="In Ref. 1; AAA31437/CAA32066." evidence="5" ref="1">
    <original>AR</original>
    <variation>PG</variation>
    <location>
        <begin position="354"/>
        <end position="355"/>
    </location>
</feature>
<feature type="sequence conflict" description="In Ref. 4; AAA31433." evidence="5" ref="4">
    <original>R</original>
    <variation>L</variation>
    <location>
        <position position="358"/>
    </location>
</feature>
<feature type="sequence conflict" description="In Ref. 3; AA sequence and 4; AAA31433." evidence="5" ref="3 4">
    <original>L</original>
    <variation>I</variation>
    <location>
        <position position="359"/>
    </location>
</feature>
<feature type="sequence conflict" description="In Ref. 4; AAA31433." evidence="5" ref="4">
    <original>T</original>
    <variation>I</variation>
    <location>
        <position position="462"/>
    </location>
</feature>
<feature type="sequence conflict" description="In Ref. 3; AA sequence." evidence="5" ref="3">
    <original>I</original>
    <variation>T</variation>
    <location>
        <position position="494"/>
    </location>
</feature>
<accession>P00187</accession>
<accession>Q29526</accession>
<gene>
    <name type="primary">CYP1A2</name>
</gene>
<proteinExistence type="evidence at protein level"/>
<keyword id="KW-0903">Direct protein sequencing</keyword>
<keyword id="KW-0256">Endoplasmic reticulum</keyword>
<keyword id="KW-0276">Fatty acid metabolism</keyword>
<keyword id="KW-0325">Glycoprotein</keyword>
<keyword id="KW-0349">Heme</keyword>
<keyword id="KW-0408">Iron</keyword>
<keyword id="KW-0443">Lipid metabolism</keyword>
<keyword id="KW-0456">Lyase</keyword>
<keyword id="KW-0472">Membrane</keyword>
<keyword id="KW-0479">Metal-binding</keyword>
<keyword id="KW-0492">Microsome</keyword>
<keyword id="KW-0503">Monooxygenase</keyword>
<keyword id="KW-0560">Oxidoreductase</keyword>
<keyword id="KW-1185">Reference proteome</keyword>
<keyword id="KW-0753">Steroid metabolism</keyword>
<keyword id="KW-1207">Sterol metabolism</keyword>
<protein>
    <recommendedName>
        <fullName>Cytochrome P450 1A2</fullName>
        <ecNumber evidence="2">1.14.14.1</ecNumber>
    </recommendedName>
    <alternativeName>
        <fullName>CYPIA2</fullName>
    </alternativeName>
    <alternativeName>
        <fullName evidence="2">Cholesterol 25-hydroxylase</fullName>
    </alternativeName>
    <alternativeName>
        <fullName>Cytochrome P450 isozyme 4</fullName>
        <shortName>Cytochrome P450 LM4</shortName>
    </alternativeName>
    <alternativeName>
        <fullName>Cytochrome P450-PM4</fullName>
    </alternativeName>
    <alternativeName>
        <fullName>Hydroperoxy icosatetraenoate dehydratase</fullName>
        <ecNumber evidence="2">4.2.1.152</ecNumber>
    </alternativeName>
</protein>
<sequence>MAMSPAAPLSVTELLLVSAVFCLVFWAVRASRPKVPKGLKRLPGPWGWPLLGHLLTLGKNPHVALARLSRRYGDVFQIRLGSTPVVVLSGLDTIKQALVRQGDDFKGRPDLYSSSFITEGQSMTFSPDSGPVWAARRRLAQDSLKSFSIASNPASSSSCYLEEHVSQEAENLIGRFQELMAAVGRFDPYSQLVVSAARVIGAMCFGRRFPQGSEEMLDVVRNSSKFVETASSGSPVDFFPILRYLPNRPLQRFKDFNQRFLRFLQKTVREHYEDFDRNSIQDITGALFKHSEKNSKANSGLIPQEKIVNLVNDIFGAGFDTITTALSWSLMYLVTNPRRQRKIQEELDAVVGRARQPRLSDRPQLPYLEAFILELFRHTSFVPFTIPHSTTRDTTLNGFHIPKECCIFINQWQINHDPQLWGDPEEFRPERFLTADGAAINKPLSEKVTLFGLGKRRCIGETLARWEVFLFLAILLQRLEFSVPPGVPVDLTPIYGLTMKHPRCEHVQARPRFSDQ</sequence>
<reference key="1">
    <citation type="journal article" date="1988" name="Eur. J. Biochem.">
        <title>cDNA cloning and functional expression in yeast Saccharomyces cerevisiae of beta-naphthoflavone-induced rabbit liver P-450 LM4 and LM6.</title>
        <authorList>
            <person name="Pompon D."/>
        </authorList>
    </citation>
    <scope>NUCLEOTIDE SEQUENCE [MRNA]</scope>
    <scope>VARIANTS SER-174; SER-233 AND GLY-299</scope>
    <source>
        <strain>New Zealand white</strain>
    </source>
</reference>
<reference key="2">
    <citation type="journal article" date="1987" name="J. Biochem.">
        <title>Structural analysis of cloned cDNAs for polycyclic hydrocarbon-inducible forms of rabbit liver microsomal cytochrome P-450.</title>
        <authorList>
            <person name="Kagawa N."/>
            <person name="Mihara K."/>
            <person name="Sato R."/>
        </authorList>
    </citation>
    <scope>NUCLEOTIDE SEQUENCE [MRNA]</scope>
    <source>
        <tissue>Liver</tissue>
    </source>
</reference>
<reference key="3">
    <citation type="journal article" date="1986" name="J. Biol. Chem.">
        <title>Complete amino acid sequence of a cytochrome P-450 isolated from beta-naphthoflavone-induced rabbit liver microsomes. Comparison with phenobarbital-induced and constitutive isozymes and identification of invariant residues.</title>
        <authorList>
            <person name="Ozols J."/>
        </authorList>
    </citation>
    <scope>PROTEIN SEQUENCE OF 2-516</scope>
</reference>
<reference key="4">
    <citation type="journal article" date="1985" name="Proc. Natl. Acad. Sci. U.S.A.">
        <title>Cloning and characterization of cDNAs encoding 2,3,7,8-tetrachlorodibenzo-p-dioxin-inducible rabbit mRNAs for cytochrome P-450 isozymes 4 and 6.</title>
        <authorList>
            <person name="Okino S.T."/>
            <person name="Quattrochi L.C."/>
            <person name="Barnes H.J."/>
            <person name="Osanto S."/>
            <person name="Griffin K.J."/>
            <person name="Johnson E.F."/>
            <person name="Tukey R.H."/>
        </authorList>
    </citation>
    <scope>NUCLEOTIDE SEQUENCE [MRNA] OF 92-515</scope>
</reference>
<reference key="5">
    <citation type="journal article" date="1992" name="Biochemistry">
        <title>Modification of cytochrome P450 1A2 enzymes by the mechanism-based inactivator 2-ethynylnaphthalene and the photoaffinity label 4-azidobiphenyl.</title>
        <authorList>
            <person name="Yun C.H."/>
            <person name="Hammons G.J."/>
            <person name="Jones G."/>
            <person name="Martin M.V."/>
            <person name="Hopkins N.E."/>
            <person name="Alworth W.L."/>
            <person name="Guengerich F.P."/>
        </authorList>
    </citation>
    <scope>PROTEIN SEQUENCE OF 176-185</scope>
</reference>
<reference key="6">
    <citation type="journal article" date="1984" name="Proc. Natl. Acad. Sci. U.S.A.">
        <title>On the amino acid sequence of cytochrome P-450 isozyme 4 from rabbit liver microsomes.</title>
        <authorList>
            <person name="Fujita V.S."/>
            <person name="Black S.D."/>
            <person name="Tarr G.E."/>
            <person name="Koop D.R."/>
            <person name="Coon M.J."/>
        </authorList>
    </citation>
    <scope>PARTIAL PROTEIN SEQUENCE</scope>
</reference>
<name>CP1A2_RABIT</name>
<organism>
    <name type="scientific">Oryctolagus cuniculus</name>
    <name type="common">Rabbit</name>
    <dbReference type="NCBI Taxonomy" id="9986"/>
    <lineage>
        <taxon>Eukaryota</taxon>
        <taxon>Metazoa</taxon>
        <taxon>Chordata</taxon>
        <taxon>Craniata</taxon>
        <taxon>Vertebrata</taxon>
        <taxon>Euteleostomi</taxon>
        <taxon>Mammalia</taxon>
        <taxon>Eutheria</taxon>
        <taxon>Euarchontoglires</taxon>
        <taxon>Glires</taxon>
        <taxon>Lagomorpha</taxon>
        <taxon>Leporidae</taxon>
        <taxon>Oryctolagus</taxon>
    </lineage>
</organism>
<evidence type="ECO:0000250" key="1"/>
<evidence type="ECO:0000250" key="2">
    <source>
        <dbReference type="UniProtKB" id="P05177"/>
    </source>
</evidence>
<evidence type="ECO:0000269" key="3">
    <source>
    </source>
</evidence>
<evidence type="ECO:0000269" key="4">
    <source>
    </source>
</evidence>
<evidence type="ECO:0000305" key="5"/>
<dbReference type="EC" id="1.14.14.1" evidence="2"/>
<dbReference type="EC" id="4.2.1.152" evidence="2"/>
<dbReference type="EMBL" id="M36538">
    <property type="protein sequence ID" value="AAA31437.1"/>
    <property type="molecule type" value="mRNA"/>
</dbReference>
<dbReference type="EMBL" id="X13853">
    <property type="protein sequence ID" value="CAA32066.1"/>
    <property type="molecule type" value="mRNA"/>
</dbReference>
<dbReference type="EMBL" id="X05686">
    <property type="protein sequence ID" value="CAA29171.1"/>
    <property type="molecule type" value="mRNA"/>
</dbReference>
<dbReference type="EMBL" id="M11728">
    <property type="protein sequence ID" value="AAA31433.1"/>
    <property type="molecule type" value="mRNA"/>
</dbReference>
<dbReference type="PIR" id="B27821">
    <property type="entry name" value="O4RBBN"/>
</dbReference>
<dbReference type="RefSeq" id="NP_001164592.1">
    <property type="nucleotide sequence ID" value="NM_001171121.1"/>
</dbReference>
<dbReference type="SMR" id="P00187"/>
<dbReference type="FunCoup" id="P00187">
    <property type="interactions" value="250"/>
</dbReference>
<dbReference type="STRING" id="9986.ENSOCUP00000008665"/>
<dbReference type="GlyCosmos" id="P00187">
    <property type="glycosylation" value="1 site, No reported glycans"/>
</dbReference>
<dbReference type="PaxDb" id="9986-ENSOCUP00000008665"/>
<dbReference type="GeneID" id="100328937"/>
<dbReference type="KEGG" id="ocu:100328937"/>
<dbReference type="eggNOG" id="KOG0156">
    <property type="taxonomic scope" value="Eukaryota"/>
</dbReference>
<dbReference type="InParanoid" id="P00187"/>
<dbReference type="OrthoDB" id="1055148at2759"/>
<dbReference type="UniPathway" id="UPA00296"/>
<dbReference type="UniPathway" id="UPA00383"/>
<dbReference type="UniPathway" id="UPA00912"/>
<dbReference type="Proteomes" id="UP000001811">
    <property type="component" value="Unplaced"/>
</dbReference>
<dbReference type="GO" id="GO:0005789">
    <property type="term" value="C:endoplasmic reticulum membrane"/>
    <property type="evidence" value="ECO:0007669"/>
    <property type="project" value="UniProtKB-SubCell"/>
</dbReference>
<dbReference type="GO" id="GO:0101020">
    <property type="term" value="F:estrogen 16-alpha-hydroxylase activity"/>
    <property type="evidence" value="ECO:0000250"/>
    <property type="project" value="UniProtKB"/>
</dbReference>
<dbReference type="GO" id="GO:0101021">
    <property type="term" value="F:estrogen 2-hydroxylase activity"/>
    <property type="evidence" value="ECO:0000250"/>
    <property type="project" value="UniProtKB"/>
</dbReference>
<dbReference type="GO" id="GO:0020037">
    <property type="term" value="F:heme binding"/>
    <property type="evidence" value="ECO:0000250"/>
    <property type="project" value="UniProtKB"/>
</dbReference>
<dbReference type="GO" id="GO:0106256">
    <property type="term" value="F:hydroperoxy icosatetraenoate dehydratase activity"/>
    <property type="evidence" value="ECO:0007669"/>
    <property type="project" value="UniProtKB-EC"/>
</dbReference>
<dbReference type="GO" id="GO:0005506">
    <property type="term" value="F:iron ion binding"/>
    <property type="evidence" value="ECO:0007669"/>
    <property type="project" value="InterPro"/>
</dbReference>
<dbReference type="GO" id="GO:0004508">
    <property type="term" value="F:steroid 17-alpha-monooxygenase activity"/>
    <property type="evidence" value="ECO:0007669"/>
    <property type="project" value="TreeGrafter"/>
</dbReference>
<dbReference type="GO" id="GO:0019369">
    <property type="term" value="P:arachidonate metabolic process"/>
    <property type="evidence" value="ECO:0007669"/>
    <property type="project" value="UniProtKB-UniPathway"/>
</dbReference>
<dbReference type="GO" id="GO:0008203">
    <property type="term" value="P:cholesterol metabolic process"/>
    <property type="evidence" value="ECO:0007669"/>
    <property type="project" value="UniProtKB-UniPathway"/>
</dbReference>
<dbReference type="GO" id="GO:0008210">
    <property type="term" value="P:estrogen metabolic process"/>
    <property type="evidence" value="ECO:0000250"/>
    <property type="project" value="UniProtKB"/>
</dbReference>
<dbReference type="GO" id="GO:0042446">
    <property type="term" value="P:hormone biosynthetic process"/>
    <property type="evidence" value="ECO:0007669"/>
    <property type="project" value="TreeGrafter"/>
</dbReference>
<dbReference type="GO" id="GO:0042448">
    <property type="term" value="P:progesterone metabolic process"/>
    <property type="evidence" value="ECO:0007669"/>
    <property type="project" value="TreeGrafter"/>
</dbReference>
<dbReference type="GO" id="GO:0042572">
    <property type="term" value="P:retinol metabolic process"/>
    <property type="evidence" value="ECO:0000250"/>
    <property type="project" value="UniProtKB"/>
</dbReference>
<dbReference type="CDD" id="cd20676">
    <property type="entry name" value="CYP1A"/>
    <property type="match status" value="1"/>
</dbReference>
<dbReference type="FunFam" id="1.10.630.10:FF:000002">
    <property type="entry name" value="Cytochrome P450 1A1"/>
    <property type="match status" value="1"/>
</dbReference>
<dbReference type="Gene3D" id="1.10.630.10">
    <property type="entry name" value="Cytochrome P450"/>
    <property type="match status" value="1"/>
</dbReference>
<dbReference type="InterPro" id="IPR001128">
    <property type="entry name" value="Cyt_P450"/>
</dbReference>
<dbReference type="InterPro" id="IPR017972">
    <property type="entry name" value="Cyt_P450_CS"/>
</dbReference>
<dbReference type="InterPro" id="IPR002401">
    <property type="entry name" value="Cyt_P450_E_grp-I"/>
</dbReference>
<dbReference type="InterPro" id="IPR008066">
    <property type="entry name" value="Cyt_P450_E_grp-I_CYP1"/>
</dbReference>
<dbReference type="InterPro" id="IPR036396">
    <property type="entry name" value="Cyt_P450_sf"/>
</dbReference>
<dbReference type="PANTHER" id="PTHR24289:SF21">
    <property type="entry name" value="CYTOCHROME P450 1A"/>
    <property type="match status" value="1"/>
</dbReference>
<dbReference type="PANTHER" id="PTHR24289">
    <property type="entry name" value="STEROID 17-ALPHA-HYDROXYLASE/17,20 LYASE"/>
    <property type="match status" value="1"/>
</dbReference>
<dbReference type="Pfam" id="PF00067">
    <property type="entry name" value="p450"/>
    <property type="match status" value="1"/>
</dbReference>
<dbReference type="PRINTS" id="PR00463">
    <property type="entry name" value="EP450I"/>
</dbReference>
<dbReference type="PRINTS" id="PR01683">
    <property type="entry name" value="EP450ICYP1A"/>
</dbReference>
<dbReference type="PRINTS" id="PR00385">
    <property type="entry name" value="P450"/>
</dbReference>
<dbReference type="SUPFAM" id="SSF48264">
    <property type="entry name" value="Cytochrome P450"/>
    <property type="match status" value="1"/>
</dbReference>
<dbReference type="PROSITE" id="PS00086">
    <property type="entry name" value="CYTOCHROME_P450"/>
    <property type="match status" value="1"/>
</dbReference>
<comment type="function">
    <text evidence="2">A cytochrome P450 monooxygenase involved in the metabolism of various endogenous substrates, including fatty acids, steroid hormones and vitamins. Mechanistically, uses molecular oxygen inserting one oxygen atom into a substrate, and reducing the second into a water molecule, with two electrons provided by NADPH via cytochrome P450 reductase (NADPH--hemoprotein reductase). Catalyzes the hydroxylation of carbon-hydrogen bonds. Exhibits high catalytic activity for the formation of hydroxyestrogens from estrone (E1) and 17beta-estradiol (E2), namely 2-hydroxy E1 and E2. Metabolizes cholesterol toward 25-hydroxycholesterol, a physiological regulator of cellular cholesterol homeostasis. May act as a major enzyme for all-trans retinoic acid biosynthesis in the liver. Catalyzes two successive oxidative transformation of all-trans retinol to all-trans retinal and then to the active form all-trans retinoic acid. Primarily catalyzes stereoselective epoxidation of the last double bond of polyunsaturated fatty acids (PUFA), displaying a strong preference for the (R,S) stereoisomer. Catalyzes bisallylic hydroxylation and omega-1 hydroxylation of PUFA. May also participate in eicosanoids metabolism by converting hydroperoxide species into oxo metabolites (lipoxygenase-like reaction, NADPH-independent). Plays a role in the oxidative metabolism of xenobiotics. Catalyzes the N-hydroxylation of heterocyclic amines and the O-deethylation of phenacetin. Metabolizes caffeine via N3-demethylation.</text>
</comment>
<comment type="catalytic activity">
    <reaction evidence="2">
        <text>an organic molecule + reduced [NADPH--hemoprotein reductase] + O2 = an alcohol + oxidized [NADPH--hemoprotein reductase] + H2O + H(+)</text>
        <dbReference type="Rhea" id="RHEA:17149"/>
        <dbReference type="Rhea" id="RHEA-COMP:11964"/>
        <dbReference type="Rhea" id="RHEA-COMP:11965"/>
        <dbReference type="ChEBI" id="CHEBI:15377"/>
        <dbReference type="ChEBI" id="CHEBI:15378"/>
        <dbReference type="ChEBI" id="CHEBI:15379"/>
        <dbReference type="ChEBI" id="CHEBI:30879"/>
        <dbReference type="ChEBI" id="CHEBI:57618"/>
        <dbReference type="ChEBI" id="CHEBI:58210"/>
        <dbReference type="ChEBI" id="CHEBI:142491"/>
        <dbReference type="EC" id="1.14.14.1"/>
    </reaction>
    <physiologicalReaction direction="left-to-right" evidence="2">
        <dbReference type="Rhea" id="RHEA:17150"/>
    </physiologicalReaction>
</comment>
<comment type="catalytic activity">
    <reaction evidence="2">
        <text>17beta-estradiol + reduced [NADPH--hemoprotein reductase] + O2 = 2-hydroxy-17beta-estradiol + oxidized [NADPH--hemoprotein reductase] + H2O + H(+)</text>
        <dbReference type="Rhea" id="RHEA:47212"/>
        <dbReference type="Rhea" id="RHEA-COMP:11964"/>
        <dbReference type="Rhea" id="RHEA-COMP:11965"/>
        <dbReference type="ChEBI" id="CHEBI:15377"/>
        <dbReference type="ChEBI" id="CHEBI:15378"/>
        <dbReference type="ChEBI" id="CHEBI:15379"/>
        <dbReference type="ChEBI" id="CHEBI:16469"/>
        <dbReference type="ChEBI" id="CHEBI:28744"/>
        <dbReference type="ChEBI" id="CHEBI:57618"/>
        <dbReference type="ChEBI" id="CHEBI:58210"/>
    </reaction>
    <physiologicalReaction direction="left-to-right" evidence="2">
        <dbReference type="Rhea" id="RHEA:47213"/>
    </physiologicalReaction>
</comment>
<comment type="catalytic activity">
    <reaction evidence="2">
        <text>17beta-estradiol + reduced [NADPH--hemoprotein reductase] + O2 = 4-hydroxy-17beta-estradiol + oxidized [NADPH--hemoprotein reductase] + H2O + H(+)</text>
        <dbReference type="Rhea" id="RHEA:47280"/>
        <dbReference type="Rhea" id="RHEA-COMP:11964"/>
        <dbReference type="Rhea" id="RHEA-COMP:11965"/>
        <dbReference type="ChEBI" id="CHEBI:15377"/>
        <dbReference type="ChEBI" id="CHEBI:15378"/>
        <dbReference type="ChEBI" id="CHEBI:15379"/>
        <dbReference type="ChEBI" id="CHEBI:16469"/>
        <dbReference type="ChEBI" id="CHEBI:57618"/>
        <dbReference type="ChEBI" id="CHEBI:58210"/>
        <dbReference type="ChEBI" id="CHEBI:62845"/>
    </reaction>
    <physiologicalReaction direction="left-to-right" evidence="2">
        <dbReference type="Rhea" id="RHEA:47281"/>
    </physiologicalReaction>
</comment>
<comment type="catalytic activity">
    <reaction evidence="2">
        <text>estrone + reduced [NADPH--hemoprotein reductase] + O2 = 2-hydroxyestrone + oxidized [NADPH--hemoprotein reductase] + H2O + H(+)</text>
        <dbReference type="Rhea" id="RHEA:47208"/>
        <dbReference type="Rhea" id="RHEA-COMP:11964"/>
        <dbReference type="Rhea" id="RHEA-COMP:11965"/>
        <dbReference type="ChEBI" id="CHEBI:1156"/>
        <dbReference type="ChEBI" id="CHEBI:15377"/>
        <dbReference type="ChEBI" id="CHEBI:15378"/>
        <dbReference type="ChEBI" id="CHEBI:15379"/>
        <dbReference type="ChEBI" id="CHEBI:17263"/>
        <dbReference type="ChEBI" id="CHEBI:57618"/>
        <dbReference type="ChEBI" id="CHEBI:58210"/>
    </reaction>
    <physiologicalReaction direction="left-to-right" evidence="2">
        <dbReference type="Rhea" id="RHEA:47209"/>
    </physiologicalReaction>
</comment>
<comment type="catalytic activity">
    <reaction evidence="2">
        <text>estrone + reduced [NADPH--hemoprotein reductase] + O2 = 4-hydroxyestrone + oxidized [NADPH--hemoprotein reductase] + H2O + H(+)</text>
        <dbReference type="Rhea" id="RHEA:47292"/>
        <dbReference type="Rhea" id="RHEA-COMP:11964"/>
        <dbReference type="Rhea" id="RHEA-COMP:11965"/>
        <dbReference type="ChEBI" id="CHEBI:15377"/>
        <dbReference type="ChEBI" id="CHEBI:15378"/>
        <dbReference type="ChEBI" id="CHEBI:15379"/>
        <dbReference type="ChEBI" id="CHEBI:17263"/>
        <dbReference type="ChEBI" id="CHEBI:57618"/>
        <dbReference type="ChEBI" id="CHEBI:58210"/>
        <dbReference type="ChEBI" id="CHEBI:87602"/>
    </reaction>
    <physiologicalReaction direction="left-to-right" evidence="2">
        <dbReference type="Rhea" id="RHEA:47293"/>
    </physiologicalReaction>
</comment>
<comment type="catalytic activity">
    <reaction evidence="2">
        <text>cholesterol + reduced [NADPH--hemoprotein reductase] + O2 = 25-hydroxycholesterol + oxidized [NADPH--hemoprotein reductase] + H2O + H(+)</text>
        <dbReference type="Rhea" id="RHEA:50256"/>
        <dbReference type="Rhea" id="RHEA-COMP:11964"/>
        <dbReference type="Rhea" id="RHEA-COMP:11965"/>
        <dbReference type="ChEBI" id="CHEBI:15377"/>
        <dbReference type="ChEBI" id="CHEBI:15378"/>
        <dbReference type="ChEBI" id="CHEBI:15379"/>
        <dbReference type="ChEBI" id="CHEBI:16113"/>
        <dbReference type="ChEBI" id="CHEBI:42977"/>
        <dbReference type="ChEBI" id="CHEBI:57618"/>
        <dbReference type="ChEBI" id="CHEBI:58210"/>
    </reaction>
    <physiologicalReaction direction="left-to-right" evidence="2">
        <dbReference type="Rhea" id="RHEA:50257"/>
    </physiologicalReaction>
</comment>
<comment type="catalytic activity">
    <reaction evidence="2">
        <text>all-trans-retinol + reduced [NADPH--hemoprotein reductase] + O2 = all-trans-retinal + oxidized [NADPH--hemoprotein reductase] + 2 H2O + H(+)</text>
        <dbReference type="Rhea" id="RHEA:42092"/>
        <dbReference type="Rhea" id="RHEA-COMP:11964"/>
        <dbReference type="Rhea" id="RHEA-COMP:11965"/>
        <dbReference type="ChEBI" id="CHEBI:15377"/>
        <dbReference type="ChEBI" id="CHEBI:15378"/>
        <dbReference type="ChEBI" id="CHEBI:15379"/>
        <dbReference type="ChEBI" id="CHEBI:17336"/>
        <dbReference type="ChEBI" id="CHEBI:17898"/>
        <dbReference type="ChEBI" id="CHEBI:57618"/>
        <dbReference type="ChEBI" id="CHEBI:58210"/>
    </reaction>
    <physiologicalReaction direction="left-to-right" evidence="2">
        <dbReference type="Rhea" id="RHEA:42093"/>
    </physiologicalReaction>
</comment>
<comment type="catalytic activity">
    <reaction evidence="2">
        <text>all-trans-retinal + reduced [NADPH--hemoprotein reductase] + O2 = all-trans-retinoate + oxidized [NADPH--hemoprotein reductase] + H2O + 2 H(+)</text>
        <dbReference type="Rhea" id="RHEA:42088"/>
        <dbReference type="Rhea" id="RHEA-COMP:11964"/>
        <dbReference type="Rhea" id="RHEA-COMP:11965"/>
        <dbReference type="ChEBI" id="CHEBI:15377"/>
        <dbReference type="ChEBI" id="CHEBI:15378"/>
        <dbReference type="ChEBI" id="CHEBI:15379"/>
        <dbReference type="ChEBI" id="CHEBI:17898"/>
        <dbReference type="ChEBI" id="CHEBI:35291"/>
        <dbReference type="ChEBI" id="CHEBI:57618"/>
        <dbReference type="ChEBI" id="CHEBI:58210"/>
    </reaction>
    <physiologicalReaction direction="left-to-right" evidence="2">
        <dbReference type="Rhea" id="RHEA:42089"/>
    </physiologicalReaction>
</comment>
<comment type="catalytic activity">
    <reaction evidence="2">
        <text>(5Z,8Z,11Z,14Z)-eicosatetraenoate + reduced [NADPH--hemoprotein reductase] + O2 = (14R,15S)-epoxy-(5Z,8Z,11Z)-eicosatrienoate + oxidized [NADPH--hemoprotein reductase] + H2O + H(+)</text>
        <dbReference type="Rhea" id="RHEA:49860"/>
        <dbReference type="Rhea" id="RHEA-COMP:11964"/>
        <dbReference type="Rhea" id="RHEA-COMP:11965"/>
        <dbReference type="ChEBI" id="CHEBI:15377"/>
        <dbReference type="ChEBI" id="CHEBI:15378"/>
        <dbReference type="ChEBI" id="CHEBI:15379"/>
        <dbReference type="ChEBI" id="CHEBI:32395"/>
        <dbReference type="ChEBI" id="CHEBI:57618"/>
        <dbReference type="ChEBI" id="CHEBI:58210"/>
        <dbReference type="ChEBI" id="CHEBI:131965"/>
    </reaction>
    <physiologicalReaction direction="left-to-right" evidence="2">
        <dbReference type="Rhea" id="RHEA:49861"/>
    </physiologicalReaction>
</comment>
<comment type="catalytic activity">
    <reaction evidence="2">
        <text>(5Z,8Z,11Z,14Z)-eicosatetraenoate + reduced [NADPH--hemoprotein reductase] + O2 = (14S,15R)-epoxy-(5Z,8Z,11Z)-eicosatrienoate + oxidized [NADPH--hemoprotein reductase] + H2O + H(+)</text>
        <dbReference type="Rhea" id="RHEA:49856"/>
        <dbReference type="Rhea" id="RHEA-COMP:11964"/>
        <dbReference type="Rhea" id="RHEA-COMP:11965"/>
        <dbReference type="ChEBI" id="CHEBI:15377"/>
        <dbReference type="ChEBI" id="CHEBI:15378"/>
        <dbReference type="ChEBI" id="CHEBI:15379"/>
        <dbReference type="ChEBI" id="CHEBI:32395"/>
        <dbReference type="ChEBI" id="CHEBI:57618"/>
        <dbReference type="ChEBI" id="CHEBI:58210"/>
        <dbReference type="ChEBI" id="CHEBI:131964"/>
    </reaction>
    <physiologicalReaction direction="left-to-right" evidence="2">
        <dbReference type="Rhea" id="RHEA:49857"/>
    </physiologicalReaction>
</comment>
<comment type="catalytic activity">
    <reaction evidence="2">
        <text>(5Z,8Z,11Z,14Z,17Z)-eicosapentaenoate + reduced [NADPH--hemoprotein reductase] + O2 = (17R,18S)-epoxy-(5Z,8Z,11Z,14Z)-eicosatetraenoate + oxidized [NADPH--hemoprotein reductase] + H2O + H(+)</text>
        <dbReference type="Rhea" id="RHEA:39779"/>
        <dbReference type="Rhea" id="RHEA-COMP:11964"/>
        <dbReference type="Rhea" id="RHEA-COMP:11965"/>
        <dbReference type="ChEBI" id="CHEBI:15377"/>
        <dbReference type="ChEBI" id="CHEBI:15378"/>
        <dbReference type="ChEBI" id="CHEBI:15379"/>
        <dbReference type="ChEBI" id="CHEBI:57618"/>
        <dbReference type="ChEBI" id="CHEBI:58210"/>
        <dbReference type="ChEBI" id="CHEBI:58562"/>
        <dbReference type="ChEBI" id="CHEBI:76634"/>
    </reaction>
    <physiologicalReaction direction="left-to-right" evidence="2">
        <dbReference type="Rhea" id="RHEA:39780"/>
    </physiologicalReaction>
</comment>
<comment type="catalytic activity">
    <reaction evidence="2">
        <text>(4Z,7Z,10Z,13Z,16Z,19Z)-docosahexaenoate + reduced [NADPH--hemoprotein reductase] + O2 = (19R,20S)-epoxy-(4Z,7Z,10Z,13Z,16Z)-docosapentaenoate + oxidized [NADPH--hemoprotein reductase] + H2O + H(+)</text>
        <dbReference type="Rhea" id="RHEA:52120"/>
        <dbReference type="Rhea" id="RHEA-COMP:11964"/>
        <dbReference type="Rhea" id="RHEA-COMP:11965"/>
        <dbReference type="ChEBI" id="CHEBI:15377"/>
        <dbReference type="ChEBI" id="CHEBI:15378"/>
        <dbReference type="ChEBI" id="CHEBI:15379"/>
        <dbReference type="ChEBI" id="CHEBI:57618"/>
        <dbReference type="ChEBI" id="CHEBI:58210"/>
        <dbReference type="ChEBI" id="CHEBI:77016"/>
        <dbReference type="ChEBI" id="CHEBI:136410"/>
    </reaction>
    <physiologicalReaction direction="left-to-right" evidence="2">
        <dbReference type="Rhea" id="RHEA:52121"/>
    </physiologicalReaction>
</comment>
<comment type="catalytic activity">
    <reaction evidence="2">
        <text>(5S)-hydroperoxy-(6E,8Z,11Z,14Z)-eicosatetraenoate = 5-oxo-(6E,8Z,11Z,14Z)-eicosatetraenoate + H2O</text>
        <dbReference type="Rhea" id="RHEA:48632"/>
        <dbReference type="ChEBI" id="CHEBI:15377"/>
        <dbReference type="ChEBI" id="CHEBI:57450"/>
        <dbReference type="ChEBI" id="CHEBI:65342"/>
    </reaction>
    <physiologicalReaction direction="left-to-right" evidence="2">
        <dbReference type="Rhea" id="RHEA:48633"/>
    </physiologicalReaction>
</comment>
<comment type="catalytic activity">
    <reaction evidence="2">
        <text>(12S)-hydroperoxy-(5Z,8Z,10E,14Z)-eicosatetraenoate = 12-oxo-(5Z,8Z,10E,14Z)-eicosatetraenoate + H2O</text>
        <dbReference type="Rhea" id="RHEA:37947"/>
        <dbReference type="ChEBI" id="CHEBI:15377"/>
        <dbReference type="ChEBI" id="CHEBI:57444"/>
        <dbReference type="ChEBI" id="CHEBI:75231"/>
        <dbReference type="EC" id="4.2.1.152"/>
    </reaction>
    <physiologicalReaction direction="left-to-right" evidence="2">
        <dbReference type="Rhea" id="RHEA:37948"/>
    </physiologicalReaction>
</comment>
<comment type="catalytic activity">
    <reaction evidence="2">
        <text>(15S)-hydroperoxy-(5Z,8Z,11Z,13E)-eicosatetraenoate = 15-oxo-(5Z,8Z,11Z,13E)-eicosatetraenoate + H2O</text>
        <dbReference type="Rhea" id="RHEA:48636"/>
        <dbReference type="ChEBI" id="CHEBI:15377"/>
        <dbReference type="ChEBI" id="CHEBI:57410"/>
        <dbReference type="ChEBI" id="CHEBI:57446"/>
    </reaction>
    <physiologicalReaction direction="left-to-right" evidence="2">
        <dbReference type="Rhea" id="RHEA:48637"/>
    </physiologicalReaction>
</comment>
<comment type="catalytic activity">
    <reaction evidence="2">
        <text>(13S)-hydroperoxy-(9Z,11E)-octadecadienoate = 13-oxo-(9Z,11E)-octadecadienoate + H2O</text>
        <dbReference type="Rhea" id="RHEA:48716"/>
        <dbReference type="ChEBI" id="CHEBI:15377"/>
        <dbReference type="ChEBI" id="CHEBI:57466"/>
        <dbReference type="ChEBI" id="CHEBI:90781"/>
    </reaction>
    <physiologicalReaction direction="left-to-right" evidence="2">
        <dbReference type="Rhea" id="RHEA:48717"/>
    </physiologicalReaction>
</comment>
<comment type="catalytic activity">
    <reaction evidence="2">
        <text>(5Z,8Z,11Z,14Z)-eicosatetraenoate + reduced [NADPH--hemoprotein reductase] + O2 = 13-hydroxy-(5Z,8Z,11Z,14Z)-eicosatetraenoate + oxidized [NADPH--hemoprotein reductase] + H2O + H(+)</text>
        <dbReference type="Rhea" id="RHEA:52292"/>
        <dbReference type="Rhea" id="RHEA-COMP:11964"/>
        <dbReference type="Rhea" id="RHEA-COMP:11965"/>
        <dbReference type="ChEBI" id="CHEBI:15377"/>
        <dbReference type="ChEBI" id="CHEBI:15378"/>
        <dbReference type="ChEBI" id="CHEBI:15379"/>
        <dbReference type="ChEBI" id="CHEBI:32395"/>
        <dbReference type="ChEBI" id="CHEBI:57618"/>
        <dbReference type="ChEBI" id="CHEBI:58210"/>
        <dbReference type="ChEBI" id="CHEBI:136524"/>
    </reaction>
    <physiologicalReaction direction="left-to-right" evidence="2">
        <dbReference type="Rhea" id="RHEA:52293"/>
    </physiologicalReaction>
</comment>
<comment type="catalytic activity">
    <reaction evidence="2">
        <text>(5Z,8Z,11Z,14Z)-eicosatetraenoate + reduced [NADPH--hemoprotein reductase] + O2 = 19-hydroxy-(5Z,8Z,11Z,14Z)-eicosatetraenoate + oxidized [NADPH--hemoprotein reductase] + H2O + H(+)</text>
        <dbReference type="Rhea" id="RHEA:39759"/>
        <dbReference type="Rhea" id="RHEA-COMP:11964"/>
        <dbReference type="Rhea" id="RHEA-COMP:11965"/>
        <dbReference type="ChEBI" id="CHEBI:15377"/>
        <dbReference type="ChEBI" id="CHEBI:15378"/>
        <dbReference type="ChEBI" id="CHEBI:15379"/>
        <dbReference type="ChEBI" id="CHEBI:32395"/>
        <dbReference type="ChEBI" id="CHEBI:57618"/>
        <dbReference type="ChEBI" id="CHEBI:58210"/>
        <dbReference type="ChEBI" id="CHEBI:76627"/>
    </reaction>
    <physiologicalReaction direction="left-to-right" evidence="2">
        <dbReference type="Rhea" id="RHEA:39760"/>
    </physiologicalReaction>
</comment>
<comment type="catalytic activity">
    <reaction evidence="2">
        <text>(9Z,12Z)-octadecadienoate + reduced [NADPH--hemoprotein reductase] + O2 = 11-hydroxy-(9Z,12Z)-octadecadienoate + oxidized [NADPH--hemoprotein reductase] + H2O + H(+)</text>
        <dbReference type="Rhea" id="RHEA:52284"/>
        <dbReference type="Rhea" id="RHEA-COMP:11964"/>
        <dbReference type="Rhea" id="RHEA-COMP:11965"/>
        <dbReference type="ChEBI" id="CHEBI:15377"/>
        <dbReference type="ChEBI" id="CHEBI:15378"/>
        <dbReference type="ChEBI" id="CHEBI:15379"/>
        <dbReference type="ChEBI" id="CHEBI:30245"/>
        <dbReference type="ChEBI" id="CHEBI:57618"/>
        <dbReference type="ChEBI" id="CHEBI:58210"/>
        <dbReference type="ChEBI" id="CHEBI:136522"/>
    </reaction>
    <physiologicalReaction direction="left-to-right" evidence="2">
        <dbReference type="Rhea" id="RHEA:52285"/>
    </physiologicalReaction>
</comment>
<comment type="cofactor">
    <cofactor evidence="1">
        <name>heme</name>
        <dbReference type="ChEBI" id="CHEBI:30413"/>
    </cofactor>
</comment>
<comment type="pathway">
    <text evidence="2">Cofactor metabolism; retinol metabolism.</text>
</comment>
<comment type="pathway">
    <text evidence="2">Steroid metabolism; cholesterol metabolism.</text>
</comment>
<comment type="pathway">
    <text evidence="2">Lipid metabolism; arachidonate metabolism.</text>
</comment>
<comment type="subunit">
    <text evidence="2">Interacts with PGRMC1; the interaction requires PGRMC1 homodimerization.</text>
</comment>
<comment type="subcellular location">
    <subcellularLocation>
        <location evidence="2">Endoplasmic reticulum membrane</location>
        <topology evidence="2">Peripheral membrane protein</topology>
    </subcellularLocation>
    <subcellularLocation>
        <location evidence="2">Microsome membrane</location>
        <topology evidence="2">Peripheral membrane protein</topology>
    </subcellularLocation>
</comment>
<comment type="induction">
    <text>By beta-naphthoflavone and 2,3,7,8-tetrachlorodibenzo-p-dioxin (TCDD).</text>
</comment>
<comment type="similarity">
    <text evidence="5">Belongs to the cytochrome P450 family.</text>
</comment>